<accession>P67778</accession>
<accession>P24142</accession>
<accession>Q3UB75</accession>
<accession>Q5SQG4</accession>
<evidence type="ECO:0000250" key="1">
    <source>
        <dbReference type="UniProtKB" id="P35232"/>
    </source>
</evidence>
<evidence type="ECO:0000250" key="2">
    <source>
        <dbReference type="UniProtKB" id="P67779"/>
    </source>
</evidence>
<evidence type="ECO:0000255" key="3"/>
<evidence type="ECO:0000269" key="4">
    <source>
    </source>
</evidence>
<evidence type="ECO:0000269" key="5">
    <source>
    </source>
</evidence>
<evidence type="ECO:0000269" key="6">
    <source>
    </source>
</evidence>
<evidence type="ECO:0000269" key="7">
    <source>
    </source>
</evidence>
<evidence type="ECO:0000269" key="8">
    <source>
    </source>
</evidence>
<evidence type="ECO:0000269" key="9">
    <source>
    </source>
</evidence>
<evidence type="ECO:0000269" key="10">
    <source>
    </source>
</evidence>
<evidence type="ECO:0000269" key="11">
    <source>
    </source>
</evidence>
<evidence type="ECO:0000305" key="12"/>
<evidence type="ECO:0000305" key="13">
    <source>
    </source>
</evidence>
<evidence type="ECO:0000312" key="14">
    <source>
        <dbReference type="MGI" id="MGI:97572"/>
    </source>
</evidence>
<evidence type="ECO:0007744" key="15">
    <source>
    </source>
</evidence>
<evidence type="ECO:0007744" key="16">
    <source>
    </source>
</evidence>
<evidence type="ECO:0007744" key="17">
    <source>
    </source>
</evidence>
<keyword id="KW-0007">Acetylation</keyword>
<keyword id="KW-1003">Cell membrane</keyword>
<keyword id="KW-0175">Coiled coil</keyword>
<keyword id="KW-0963">Cytoplasm</keyword>
<keyword id="KW-0903">Direct protein sequencing</keyword>
<keyword id="KW-0237">DNA synthesis</keyword>
<keyword id="KW-0472">Membrane</keyword>
<keyword id="KW-0496">Mitochondrion</keyword>
<keyword id="KW-0999">Mitochondrion inner membrane</keyword>
<keyword id="KW-0539">Nucleus</keyword>
<keyword id="KW-0597">Phosphoprotein</keyword>
<keyword id="KW-1185">Reference proteome</keyword>
<organism>
    <name type="scientific">Mus musculus</name>
    <name type="common">Mouse</name>
    <dbReference type="NCBI Taxonomy" id="10090"/>
    <lineage>
        <taxon>Eukaryota</taxon>
        <taxon>Metazoa</taxon>
        <taxon>Chordata</taxon>
        <taxon>Craniata</taxon>
        <taxon>Vertebrata</taxon>
        <taxon>Euteleostomi</taxon>
        <taxon>Mammalia</taxon>
        <taxon>Eutheria</taxon>
        <taxon>Euarchontoglires</taxon>
        <taxon>Glires</taxon>
        <taxon>Rodentia</taxon>
        <taxon>Myomorpha</taxon>
        <taxon>Muroidea</taxon>
        <taxon>Muridae</taxon>
        <taxon>Murinae</taxon>
        <taxon>Mus</taxon>
        <taxon>Mus</taxon>
    </lineage>
</organism>
<reference key="1">
    <citation type="journal article" date="1994" name="EMBO J.">
        <title>The IgM antigen receptor of B lymphocytes is associated with prohibitin and a prohibitin-related protein.</title>
        <authorList>
            <person name="Terashima M."/>
            <person name="Kim K.-M."/>
            <person name="Adachi T."/>
            <person name="Nielsen P.J."/>
            <person name="Reth M."/>
            <person name="Koehler G."/>
            <person name="Lamers M.C."/>
        </authorList>
    </citation>
    <scope>NUCLEOTIDE SEQUENCE [MRNA]</scope>
    <scope>TISSUE SPECIFICITY</scope>
    <source>
        <strain>BALB/cJ</strain>
        <tissue>Lymphoid tissue</tissue>
    </source>
</reference>
<reference key="2">
    <citation type="journal article" date="2005" name="Science">
        <title>The transcriptional landscape of the mammalian genome.</title>
        <authorList>
            <person name="Carninci P."/>
            <person name="Kasukawa T."/>
            <person name="Katayama S."/>
            <person name="Gough J."/>
            <person name="Frith M.C."/>
            <person name="Maeda N."/>
            <person name="Oyama R."/>
            <person name="Ravasi T."/>
            <person name="Lenhard B."/>
            <person name="Wells C."/>
            <person name="Kodzius R."/>
            <person name="Shimokawa K."/>
            <person name="Bajic V.B."/>
            <person name="Brenner S.E."/>
            <person name="Batalov S."/>
            <person name="Forrest A.R."/>
            <person name="Zavolan M."/>
            <person name="Davis M.J."/>
            <person name="Wilming L.G."/>
            <person name="Aidinis V."/>
            <person name="Allen J.E."/>
            <person name="Ambesi-Impiombato A."/>
            <person name="Apweiler R."/>
            <person name="Aturaliya R.N."/>
            <person name="Bailey T.L."/>
            <person name="Bansal M."/>
            <person name="Baxter L."/>
            <person name="Beisel K.W."/>
            <person name="Bersano T."/>
            <person name="Bono H."/>
            <person name="Chalk A.M."/>
            <person name="Chiu K.P."/>
            <person name="Choudhary V."/>
            <person name="Christoffels A."/>
            <person name="Clutterbuck D.R."/>
            <person name="Crowe M.L."/>
            <person name="Dalla E."/>
            <person name="Dalrymple B.P."/>
            <person name="de Bono B."/>
            <person name="Della Gatta G."/>
            <person name="di Bernardo D."/>
            <person name="Down T."/>
            <person name="Engstrom P."/>
            <person name="Fagiolini M."/>
            <person name="Faulkner G."/>
            <person name="Fletcher C.F."/>
            <person name="Fukushima T."/>
            <person name="Furuno M."/>
            <person name="Futaki S."/>
            <person name="Gariboldi M."/>
            <person name="Georgii-Hemming P."/>
            <person name="Gingeras T.R."/>
            <person name="Gojobori T."/>
            <person name="Green R.E."/>
            <person name="Gustincich S."/>
            <person name="Harbers M."/>
            <person name="Hayashi Y."/>
            <person name="Hensch T.K."/>
            <person name="Hirokawa N."/>
            <person name="Hill D."/>
            <person name="Huminiecki L."/>
            <person name="Iacono M."/>
            <person name="Ikeo K."/>
            <person name="Iwama A."/>
            <person name="Ishikawa T."/>
            <person name="Jakt M."/>
            <person name="Kanapin A."/>
            <person name="Katoh M."/>
            <person name="Kawasawa Y."/>
            <person name="Kelso J."/>
            <person name="Kitamura H."/>
            <person name="Kitano H."/>
            <person name="Kollias G."/>
            <person name="Krishnan S.P."/>
            <person name="Kruger A."/>
            <person name="Kummerfeld S.K."/>
            <person name="Kurochkin I.V."/>
            <person name="Lareau L.F."/>
            <person name="Lazarevic D."/>
            <person name="Lipovich L."/>
            <person name="Liu J."/>
            <person name="Liuni S."/>
            <person name="McWilliam S."/>
            <person name="Madan Babu M."/>
            <person name="Madera M."/>
            <person name="Marchionni L."/>
            <person name="Matsuda H."/>
            <person name="Matsuzawa S."/>
            <person name="Miki H."/>
            <person name="Mignone F."/>
            <person name="Miyake S."/>
            <person name="Morris K."/>
            <person name="Mottagui-Tabar S."/>
            <person name="Mulder N."/>
            <person name="Nakano N."/>
            <person name="Nakauchi H."/>
            <person name="Ng P."/>
            <person name="Nilsson R."/>
            <person name="Nishiguchi S."/>
            <person name="Nishikawa S."/>
            <person name="Nori F."/>
            <person name="Ohara O."/>
            <person name="Okazaki Y."/>
            <person name="Orlando V."/>
            <person name="Pang K.C."/>
            <person name="Pavan W.J."/>
            <person name="Pavesi G."/>
            <person name="Pesole G."/>
            <person name="Petrovsky N."/>
            <person name="Piazza S."/>
            <person name="Reed J."/>
            <person name="Reid J.F."/>
            <person name="Ring B.Z."/>
            <person name="Ringwald M."/>
            <person name="Rost B."/>
            <person name="Ruan Y."/>
            <person name="Salzberg S.L."/>
            <person name="Sandelin A."/>
            <person name="Schneider C."/>
            <person name="Schoenbach C."/>
            <person name="Sekiguchi K."/>
            <person name="Semple C.A."/>
            <person name="Seno S."/>
            <person name="Sessa L."/>
            <person name="Sheng Y."/>
            <person name="Shibata Y."/>
            <person name="Shimada H."/>
            <person name="Shimada K."/>
            <person name="Silva D."/>
            <person name="Sinclair B."/>
            <person name="Sperling S."/>
            <person name="Stupka E."/>
            <person name="Sugiura K."/>
            <person name="Sultana R."/>
            <person name="Takenaka Y."/>
            <person name="Taki K."/>
            <person name="Tammoja K."/>
            <person name="Tan S.L."/>
            <person name="Tang S."/>
            <person name="Taylor M.S."/>
            <person name="Tegner J."/>
            <person name="Teichmann S.A."/>
            <person name="Ueda H.R."/>
            <person name="van Nimwegen E."/>
            <person name="Verardo R."/>
            <person name="Wei C.L."/>
            <person name="Yagi K."/>
            <person name="Yamanishi H."/>
            <person name="Zabarovsky E."/>
            <person name="Zhu S."/>
            <person name="Zimmer A."/>
            <person name="Hide W."/>
            <person name="Bult C."/>
            <person name="Grimmond S.M."/>
            <person name="Teasdale R.D."/>
            <person name="Liu E.T."/>
            <person name="Brusic V."/>
            <person name="Quackenbush J."/>
            <person name="Wahlestedt C."/>
            <person name="Mattick J.S."/>
            <person name="Hume D.A."/>
            <person name="Kai C."/>
            <person name="Sasaki D."/>
            <person name="Tomaru Y."/>
            <person name="Fukuda S."/>
            <person name="Kanamori-Katayama M."/>
            <person name="Suzuki M."/>
            <person name="Aoki J."/>
            <person name="Arakawa T."/>
            <person name="Iida J."/>
            <person name="Imamura K."/>
            <person name="Itoh M."/>
            <person name="Kato T."/>
            <person name="Kawaji H."/>
            <person name="Kawagashira N."/>
            <person name="Kawashima T."/>
            <person name="Kojima M."/>
            <person name="Kondo S."/>
            <person name="Konno H."/>
            <person name="Nakano K."/>
            <person name="Ninomiya N."/>
            <person name="Nishio T."/>
            <person name="Okada M."/>
            <person name="Plessy C."/>
            <person name="Shibata K."/>
            <person name="Shiraki T."/>
            <person name="Suzuki S."/>
            <person name="Tagami M."/>
            <person name="Waki K."/>
            <person name="Watahiki A."/>
            <person name="Okamura-Oho Y."/>
            <person name="Suzuki H."/>
            <person name="Kawai J."/>
            <person name="Hayashizaki Y."/>
        </authorList>
    </citation>
    <scope>NUCLEOTIDE SEQUENCE [LARGE SCALE MRNA]</scope>
    <source>
        <strain>C57BL/6J</strain>
        <strain>DBA/2J</strain>
        <tissue>Bone marrow</tissue>
        <tissue>Heart</tissue>
        <tissue>Kidney</tissue>
    </source>
</reference>
<reference key="3">
    <citation type="journal article" date="2009" name="PLoS Biol.">
        <title>Lineage-specific biology revealed by a finished genome assembly of the mouse.</title>
        <authorList>
            <person name="Church D.M."/>
            <person name="Goodstadt L."/>
            <person name="Hillier L.W."/>
            <person name="Zody M.C."/>
            <person name="Goldstein S."/>
            <person name="She X."/>
            <person name="Bult C.J."/>
            <person name="Agarwala R."/>
            <person name="Cherry J.L."/>
            <person name="DiCuccio M."/>
            <person name="Hlavina W."/>
            <person name="Kapustin Y."/>
            <person name="Meric P."/>
            <person name="Maglott D."/>
            <person name="Birtle Z."/>
            <person name="Marques A.C."/>
            <person name="Graves T."/>
            <person name="Zhou S."/>
            <person name="Teague B."/>
            <person name="Potamousis K."/>
            <person name="Churas C."/>
            <person name="Place M."/>
            <person name="Herschleb J."/>
            <person name="Runnheim R."/>
            <person name="Forrest D."/>
            <person name="Amos-Landgraf J."/>
            <person name="Schwartz D.C."/>
            <person name="Cheng Z."/>
            <person name="Lindblad-Toh K."/>
            <person name="Eichler E.E."/>
            <person name="Ponting C.P."/>
        </authorList>
    </citation>
    <scope>NUCLEOTIDE SEQUENCE [LARGE SCALE GENOMIC DNA]</scope>
    <source>
        <strain>C57BL/6J</strain>
    </source>
</reference>
<reference key="4">
    <citation type="journal article" date="2004" name="Genome Res.">
        <title>The status, quality, and expansion of the NIH full-length cDNA project: the Mammalian Gene Collection (MGC).</title>
        <authorList>
            <consortium name="The MGC Project Team"/>
        </authorList>
    </citation>
    <scope>NUCLEOTIDE SEQUENCE [LARGE SCALE MRNA]</scope>
    <source>
        <strain>C57BL/6J</strain>
        <tissue>Eye</tissue>
    </source>
</reference>
<reference key="5">
    <citation type="submission" date="2007-03" db="UniProtKB">
        <authorList>
            <person name="Lubec G."/>
            <person name="Klug S."/>
        </authorList>
    </citation>
    <scope>PROTEIN SEQUENCE OF 12-34; 94-105; 158-177; 220-239 AND 241-253</scope>
    <scope>IDENTIFICATION BY MASS SPECTROMETRY</scope>
    <source>
        <tissue>Hippocampus</tissue>
    </source>
</reference>
<reference key="6">
    <citation type="journal article" date="2001" name="Exp. Cell Res.">
        <title>Mammalian prohibitin proteins respond to mitochondrial stress and decrease during cellular senescence.</title>
        <authorList>
            <person name="Coates P.J."/>
            <person name="Nenutil R."/>
            <person name="McGregor A."/>
            <person name="Picksley S.M."/>
            <person name="Crouch D.H."/>
            <person name="Hall P.A."/>
            <person name="Wright E.G."/>
        </authorList>
    </citation>
    <scope>INTERACTION WITH PHB2</scope>
    <scope>SUBCELLULAR LOCATION</scope>
    <scope>DEVELOPMENTAL STAGE</scope>
</reference>
<reference key="7">
    <citation type="journal article" date="2008" name="J. Proteome Res.">
        <title>Large-scale identification and evolution indexing of tyrosine phosphorylation sites from murine brain.</title>
        <authorList>
            <person name="Ballif B.A."/>
            <person name="Carey G.R."/>
            <person name="Sunyaev S.R."/>
            <person name="Gygi S.P."/>
        </authorList>
    </citation>
    <scope>PHOSPHORYLATION [LARGE SCALE ANALYSIS] AT TYR-249</scope>
    <scope>IDENTIFICATION BY MASS SPECTROMETRY [LARGE SCALE ANALYSIS]</scope>
    <source>
        <tissue>Brain</tissue>
    </source>
</reference>
<reference key="8">
    <citation type="journal article" date="2010" name="Cell">
        <title>A tissue-specific atlas of mouse protein phosphorylation and expression.</title>
        <authorList>
            <person name="Huttlin E.L."/>
            <person name="Jedrychowski M.P."/>
            <person name="Elias J.E."/>
            <person name="Goswami T."/>
            <person name="Rad R."/>
            <person name="Beausoleil S.A."/>
            <person name="Villen J."/>
            <person name="Haas W."/>
            <person name="Sowa M.E."/>
            <person name="Gygi S.P."/>
        </authorList>
    </citation>
    <scope>IDENTIFICATION BY MASS SPECTROMETRY [LARGE SCALE ANALYSIS]</scope>
    <source>
        <tissue>Brain</tissue>
        <tissue>Brown adipose tissue</tissue>
        <tissue>Heart</tissue>
        <tissue>Kidney</tissue>
        <tissue>Liver</tissue>
        <tissue>Lung</tissue>
        <tissue>Pancreas</tissue>
        <tissue>Spleen</tissue>
        <tissue>Testis</tissue>
    </source>
</reference>
<reference key="9">
    <citation type="journal article" date="2011" name="FASEB J.">
        <title>Sphingosine-1-phosphate produced by sphingosine kinase 2 in mitochondria interacts with prohibitin 2 to regulate complex IV assembly and respiration.</title>
        <authorList>
            <person name="Strub G.M."/>
            <person name="Paillard M."/>
            <person name="Liang J."/>
            <person name="Gomez L."/>
            <person name="Allegood J.C."/>
            <person name="Hait N.C."/>
            <person name="Maceyka M."/>
            <person name="Price M.M."/>
            <person name="Chen Q."/>
            <person name="Simpson D.C."/>
            <person name="Kordula T."/>
            <person name="Milstien S."/>
            <person name="Lesnefsky E.J."/>
            <person name="Spiegel S."/>
        </authorList>
    </citation>
    <scope>SUBCELLULAR LOCATION</scope>
</reference>
<reference key="10">
    <citation type="journal article" date="2013" name="J. Immunol.">
        <title>Prohibitins and the cytoplasmic domain of CD86 cooperate to mediate CD86 signaling in B lymphocytes.</title>
        <authorList>
            <person name="Lucas C.R."/>
            <person name="Cordero-Nieves H.M."/>
            <person name="Erbe R.S."/>
            <person name="McAlees J.W."/>
            <person name="Bhatia S."/>
            <person name="Hodes R.J."/>
            <person name="Campbell K.S."/>
            <person name="Sanders V.M."/>
        </authorList>
    </citation>
    <scope>FUNCTION</scope>
    <scope>INTERACTION WITH CD86</scope>
    <scope>INDUCTION BY CD40L</scope>
</reference>
<reference key="11">
    <citation type="journal article" date="2013" name="Mol. Cell">
        <title>SIRT5-mediated lysine desuccinylation impacts diverse metabolic pathways.</title>
        <authorList>
            <person name="Park J."/>
            <person name="Chen Y."/>
            <person name="Tishkoff D.X."/>
            <person name="Peng C."/>
            <person name="Tan M."/>
            <person name="Dai L."/>
            <person name="Xie Z."/>
            <person name="Zhang Y."/>
            <person name="Zwaans B.M."/>
            <person name="Skinner M.E."/>
            <person name="Lombard D.B."/>
            <person name="Zhao Y."/>
        </authorList>
    </citation>
    <scope>SUCCINYLATION [LARGE SCALE ANALYSIS] AT LYS-202</scope>
    <scope>IDENTIFICATION BY MASS SPECTROMETRY [LARGE SCALE ANALYSIS]</scope>
    <source>
        <tissue>Embryonic fibroblast</tissue>
        <tissue>Liver</tissue>
    </source>
</reference>
<reference key="12">
    <citation type="journal article" date="2013" name="Proc. Natl. Acad. Sci. U.S.A.">
        <title>Label-free quantitative proteomics of the lysine acetylome in mitochondria identifies substrates of SIRT3 in metabolic pathways.</title>
        <authorList>
            <person name="Rardin M.J."/>
            <person name="Newman J.C."/>
            <person name="Held J.M."/>
            <person name="Cusack M.P."/>
            <person name="Sorensen D.J."/>
            <person name="Li B."/>
            <person name="Schilling B."/>
            <person name="Mooney S.D."/>
            <person name="Kahn C.R."/>
            <person name="Verdin E."/>
            <person name="Gibson B.W."/>
        </authorList>
    </citation>
    <scope>ACETYLATION [LARGE SCALE ANALYSIS] AT LYS-128; LYS-186 AND LYS-202</scope>
    <scope>IDENTIFICATION BY MASS SPECTROMETRY [LARGE SCALE ANALYSIS]</scope>
    <source>
        <tissue>Liver</tissue>
    </source>
</reference>
<reference key="13">
    <citation type="journal article" date="2014" name="Cell Metab.">
        <title>DNAJC19, a mitochondrial cochaperone associated with cardiomyopathy, forms a complex with prohibitins to regulate cardiolipin remodeling.</title>
        <authorList>
            <person name="Richter-Dennerlein R."/>
            <person name="Korwitz A."/>
            <person name="Haag M."/>
            <person name="Tatsuta T."/>
            <person name="Dargazanli S."/>
            <person name="Baker M."/>
            <person name="Decker T."/>
            <person name="Lamkemeyer T."/>
            <person name="Rugarli E.I."/>
            <person name="Langer T."/>
        </authorList>
    </citation>
    <scope>FUNCTION</scope>
    <scope>INTERACTION WITH PHB2</scope>
    <scope>SUBCELLULAR LOCATION</scope>
</reference>
<reference key="14">
    <citation type="journal article" date="2014" name="Diabetes">
        <title>Prohibitin overexpression in adipocytes induces mitochondrial biogenesis, leads to obesity development, and affects glucose homeostasis in a sex-specific manner.</title>
        <authorList>
            <person name="Ande S.R."/>
            <person name="Nguyen K.H."/>
            <person name="Padilla-Meier G.P."/>
            <person name="Wahida W."/>
            <person name="Nyomba B.L."/>
            <person name="Mishra S."/>
        </authorList>
    </citation>
    <scope>FUNCTION</scope>
</reference>
<reference key="15">
    <citation type="journal article" date="2018" name="PLoS Pathog.">
        <title>Prohibitin plays a critical role in Enterovirus 71 neuropathogenesis.</title>
        <authorList>
            <person name="Too I.H.K."/>
            <person name="Bonne I."/>
            <person name="Tan E.L."/>
            <person name="Chu J.J.H."/>
            <person name="Alonso S."/>
        </authorList>
    </citation>
    <scope>FUNCTION (MICROBIAL INFECTION)</scope>
    <scope>INTERACTION WITH HUMAN ENTEROVIRUS 71 CAPSID PROTEIN VP0; PROTEIN 3CD AND PROTEASE 3C</scope>
    <scope>SUBCELLULAR LOCATION</scope>
    <scope>ACTIVITY REGULATION</scope>
</reference>
<reference key="16">
    <citation type="journal article" date="2020" name="Cell Death Differ.">
        <title>Prohibitin levels regulate OMA1 activity and turnover in neurons.</title>
        <authorList>
            <person name="Anderson C.J."/>
            <person name="Kahl A."/>
            <person name="Fruitman H."/>
            <person name="Qian L."/>
            <person name="Zhou P."/>
            <person name="Manfredi G."/>
            <person name="Iadecola C."/>
        </authorList>
    </citation>
    <scope>FUNCTION</scope>
</reference>
<name>PHB1_MOUSE</name>
<comment type="function">
    <text evidence="2 4 5 6 7 8 9">Protein with pleiotropic attributes mediated in a cell-compartment- and tissue-specific manner, which include the plasma membrane-associated cell signaling functions, mitochondrial chaperone, and transcriptional co-regulator of transcription factors in the nucleus (PubMed:11302691, PubMed:20959514, PubMed:23241883, PubMed:24856930, PubMed:29324904). Plays a role in adipose tissue and glucose homeostasis in a sex-specific manner (PubMed:24947361). Contributes to pulmonary vascular remodeling by accelerating proliferation of pulmonary arterial smooth muscle cells (By similarity).</text>
</comment>
<comment type="function">
    <text evidence="1 4 7 10 12">In the mitochondria, together with PHB2, forms large ring complexes (prohibitin complexes) in the inner mitochondrial membrane (IMM) and functions as a chaperone protein that stabilizes mitochondrial respiratory enzymes and maintains mitochondrial integrity in the IMM, which is required for mitochondrial morphogenesis, neuronal survival, and normal lifespan (Probable). The prohibitin complex, with DNAJC19, regulates cardiolipin remodeling and the protein turnover of OMA1 in a cardiolipin-binding manner (PubMed:24856930). Regulates mitochondrial respiration activity playing a role in cellular aging (PubMed:11302691). The prohibitin complex plays a role of mitophagy receptor involved in targeting mitochondria for autophagic degradation (PubMed:31819158). Involved in mitochondrial-mediated antiviral innate immunity, activates RIG-I-mediated signal transduction and production of IFNB1 and pro-inflammatory cytokine IL6 (By similarity).</text>
</comment>
<comment type="function">
    <text evidence="1">In the nucleus, acts as a transcription coregulator, enhances promoter binding by TP53, a transcription factor it activates, but reduces the promoter binding by E2F1, a transcription factor it represses (By similarity). Interacts with STAT3 to affect IL17 secretion in T-helper Th17 cells (By similarity).</text>
</comment>
<comment type="function">
    <text evidence="6">In the plasma membrane, cooperates with CD86 to mediate CD86-signaling in B lymphocytes that regulates the level of IgG1 produced through the activation of distal signaling intermediates (PubMed:23241883). Upon CD40 engagement, required to activate NF-kappa-B signaling pathway via phospholipase C and protein kinase C activation (PubMed:23241883).</text>
</comment>
<comment type="function">
    <text evidence="9">(Microbial infection) In neuronal cells, cell surface-expressed PHB1 is involved in human enterovirus 71/EV-71 entry into neuronal cells specifically, while membrane-bound mitochondrial PHB1 associates with the virus replication complex and facilitates viral replication (PubMed:29324904). May serve as a receptor for EV71 (PubMed:29324904).</text>
</comment>
<comment type="activity regulation">
    <text evidence="9">Target of the anti-cancer drug Rocaglamide (Roc-A).</text>
</comment>
<comment type="subunit">
    <text evidence="1 6">Interacts with PHB2. Interacts with STOML2. Interacts with CD86 (via cytoplasmic domain); the interactions increases after priming with CD40 (PubMed:23241883).</text>
</comment>
<comment type="subunit">
    <text evidence="9">(Microbial infection) Interacts with human enterovirus 71/EV-71 capsid protein VP0, protein 3CD and protease 3C.</text>
</comment>
<comment type="interaction">
    <interactant intactId="EBI-298507">
        <id>P67778</id>
    </interactant>
    <interactant intactId="EBI-445002">
        <id>O35129</id>
        <label>Phb2</label>
    </interactant>
    <organismsDiffer>false</organismsDiffer>
    <experiments>3</experiments>
</comment>
<comment type="subcellular location">
    <subcellularLocation>
        <location evidence="4 5 9">Mitochondrion inner membrane</location>
    </subcellularLocation>
    <subcellularLocation>
        <location evidence="5">Nucleus</location>
    </subcellularLocation>
    <subcellularLocation>
        <location evidence="13">Cell membrane</location>
    </subcellularLocation>
    <subcellularLocation>
        <location evidence="9">Cytoplasm</location>
    </subcellularLocation>
</comment>
<comment type="tissue specificity">
    <text evidence="11">Widely expressed in different tissues.</text>
</comment>
<comment type="developmental stage">
    <text evidence="4">Throughout gestation, highly expressed in brown fat, heart, liver, developing renal tubules and neurons, and detected at lower levels in tissues such as lung and exocrine pancreas.</text>
</comment>
<comment type="induction">
    <text evidence="6">In B cells, expression is increased by CD40 engagement (at protein level).</text>
</comment>
<comment type="similarity">
    <text evidence="12">Belongs to the prohibitin family.</text>
</comment>
<gene>
    <name type="primary">Phb1</name>
    <name evidence="14" type="synonym">Phb</name>
</gene>
<dbReference type="EMBL" id="X78682">
    <property type="protein sequence ID" value="CAA55349.1"/>
    <property type="molecule type" value="mRNA"/>
</dbReference>
<dbReference type="EMBL" id="AK002714">
    <property type="protein sequence ID" value="BAB22305.1"/>
    <property type="molecule type" value="mRNA"/>
</dbReference>
<dbReference type="EMBL" id="AK010619">
    <property type="protein sequence ID" value="BAB27067.1"/>
    <property type="molecule type" value="mRNA"/>
</dbReference>
<dbReference type="EMBL" id="AK150956">
    <property type="protein sequence ID" value="BAE29988.1"/>
    <property type="molecule type" value="mRNA"/>
</dbReference>
<dbReference type="EMBL" id="AK151073">
    <property type="protein sequence ID" value="BAE30089.1"/>
    <property type="molecule type" value="mRNA"/>
</dbReference>
<dbReference type="EMBL" id="AK168248">
    <property type="protein sequence ID" value="BAE40198.1"/>
    <property type="molecule type" value="mRNA"/>
</dbReference>
<dbReference type="EMBL" id="AK168656">
    <property type="protein sequence ID" value="BAE40512.1"/>
    <property type="molecule type" value="mRNA"/>
</dbReference>
<dbReference type="EMBL" id="AL732490">
    <property type="status" value="NOT_ANNOTATED_CDS"/>
    <property type="molecule type" value="Genomic_DNA"/>
</dbReference>
<dbReference type="EMBL" id="BC083354">
    <property type="protein sequence ID" value="AAH83354.1"/>
    <property type="molecule type" value="mRNA"/>
</dbReference>
<dbReference type="EMBL" id="BC089034">
    <property type="protein sequence ID" value="AAH89034.1"/>
    <property type="molecule type" value="mRNA"/>
</dbReference>
<dbReference type="CCDS" id="CCDS25280.1"/>
<dbReference type="RefSeq" id="NP_032857.1">
    <property type="nucleotide sequence ID" value="NM_008831.5"/>
</dbReference>
<dbReference type="SMR" id="P67778"/>
<dbReference type="BioGRID" id="202141">
    <property type="interactions" value="24"/>
</dbReference>
<dbReference type="ComplexPortal" id="CPX-5743">
    <property type="entry name" value="Prohibitin complex"/>
</dbReference>
<dbReference type="CORUM" id="P67778"/>
<dbReference type="FunCoup" id="P67778">
    <property type="interactions" value="2235"/>
</dbReference>
<dbReference type="IntAct" id="P67778">
    <property type="interactions" value="16"/>
</dbReference>
<dbReference type="MINT" id="P67778"/>
<dbReference type="STRING" id="10090.ENSMUSP00000119603"/>
<dbReference type="ChEMBL" id="CHEMBL3751656"/>
<dbReference type="GlyGen" id="P67778">
    <property type="glycosylation" value="3 sites, 2 N-linked glycans (2 sites), 1 O-linked glycan (1 site)"/>
</dbReference>
<dbReference type="iPTMnet" id="P67778"/>
<dbReference type="PhosphoSitePlus" id="P67778"/>
<dbReference type="SwissPalm" id="P67778"/>
<dbReference type="REPRODUCTION-2DPAGE" id="IPI00133440"/>
<dbReference type="REPRODUCTION-2DPAGE" id="P67778"/>
<dbReference type="jPOST" id="P67778"/>
<dbReference type="PaxDb" id="10090-ENSMUSP00000119603"/>
<dbReference type="PeptideAtlas" id="P67778"/>
<dbReference type="ProteomicsDB" id="301808"/>
<dbReference type="Pumba" id="P67778"/>
<dbReference type="TopDownProteomics" id="P67778"/>
<dbReference type="Antibodypedia" id="1078">
    <property type="antibodies" value="788 antibodies from 43 providers"/>
</dbReference>
<dbReference type="DNASU" id="18673"/>
<dbReference type="Ensembl" id="ENSMUST00000125172.8">
    <property type="protein sequence ID" value="ENSMUSP00000119603.2"/>
    <property type="gene ID" value="ENSMUSG00000038845.12"/>
</dbReference>
<dbReference type="GeneID" id="18673"/>
<dbReference type="KEGG" id="mmu:18673"/>
<dbReference type="UCSC" id="uc007lan.2">
    <property type="organism name" value="mouse"/>
</dbReference>
<dbReference type="AGR" id="MGI:97572"/>
<dbReference type="CTD" id="5245"/>
<dbReference type="MGI" id="MGI:97572">
    <property type="gene designation" value="Phb1"/>
</dbReference>
<dbReference type="VEuPathDB" id="HostDB:ENSMUSG00000038845"/>
<dbReference type="eggNOG" id="KOG3083">
    <property type="taxonomic scope" value="Eukaryota"/>
</dbReference>
<dbReference type="GeneTree" id="ENSGT00950000183070"/>
<dbReference type="HOGENOM" id="CLU_047969_0_0_1"/>
<dbReference type="InParanoid" id="P67778"/>
<dbReference type="OMA" id="YEFRLVT"/>
<dbReference type="OrthoDB" id="275637at2759"/>
<dbReference type="PhylomeDB" id="P67778"/>
<dbReference type="TreeFam" id="TF300095"/>
<dbReference type="Reactome" id="R-MMU-5673000">
    <property type="pathway name" value="RAF activation"/>
</dbReference>
<dbReference type="Reactome" id="R-MMU-8949664">
    <property type="pathway name" value="Processing of SMDT1"/>
</dbReference>
<dbReference type="BioGRID-ORCS" id="18673">
    <property type="hits" value="33 hits in 80 CRISPR screens"/>
</dbReference>
<dbReference type="CD-CODE" id="CE726F99">
    <property type="entry name" value="Postsynaptic density"/>
</dbReference>
<dbReference type="ChiTaRS" id="Phb">
    <property type="organism name" value="mouse"/>
</dbReference>
<dbReference type="PRO" id="PR:P67778"/>
<dbReference type="Proteomes" id="UP000000589">
    <property type="component" value="Chromosome 11"/>
</dbReference>
<dbReference type="RNAct" id="P67778">
    <property type="molecule type" value="protein"/>
</dbReference>
<dbReference type="Bgee" id="ENSMUSG00000038845">
    <property type="expression patterns" value="Expressed in yolk sac and 261 other cell types or tissues"/>
</dbReference>
<dbReference type="ExpressionAtlas" id="P67778">
    <property type="expression patterns" value="baseline and differential"/>
</dbReference>
<dbReference type="GO" id="GO:0009986">
    <property type="term" value="C:cell surface"/>
    <property type="evidence" value="ECO:0000314"/>
    <property type="project" value="UniProtKB"/>
</dbReference>
<dbReference type="GO" id="GO:0005737">
    <property type="term" value="C:cytoplasm"/>
    <property type="evidence" value="ECO:0000314"/>
    <property type="project" value="UniProtKB"/>
</dbReference>
<dbReference type="GO" id="GO:0005769">
    <property type="term" value="C:early endosome"/>
    <property type="evidence" value="ECO:0007669"/>
    <property type="project" value="Ensembl"/>
</dbReference>
<dbReference type="GO" id="GO:0098891">
    <property type="term" value="C:extrinsic component of presynaptic active zone membrane"/>
    <property type="evidence" value="ECO:0007669"/>
    <property type="project" value="Ensembl"/>
</dbReference>
<dbReference type="GO" id="GO:0098982">
    <property type="term" value="C:GABA-ergic synapse"/>
    <property type="evidence" value="ECO:0007669"/>
    <property type="project" value="Ensembl"/>
</dbReference>
<dbReference type="GO" id="GO:0098978">
    <property type="term" value="C:glutamatergic synapse"/>
    <property type="evidence" value="ECO:0007669"/>
    <property type="project" value="Ensembl"/>
</dbReference>
<dbReference type="GO" id="GO:0005743">
    <property type="term" value="C:mitochondrial inner membrane"/>
    <property type="evidence" value="ECO:0000314"/>
    <property type="project" value="UniProtKB"/>
</dbReference>
<dbReference type="GO" id="GO:0005741">
    <property type="term" value="C:mitochondrial outer membrane"/>
    <property type="evidence" value="ECO:0007669"/>
    <property type="project" value="Ensembl"/>
</dbReference>
<dbReference type="GO" id="GO:0035632">
    <property type="term" value="C:mitochondrial prohibitin complex"/>
    <property type="evidence" value="ECO:0000353"/>
    <property type="project" value="ComplexPortal"/>
</dbReference>
<dbReference type="GO" id="GO:0005739">
    <property type="term" value="C:mitochondrion"/>
    <property type="evidence" value="ECO:0000314"/>
    <property type="project" value="UniProtKB"/>
</dbReference>
<dbReference type="GO" id="GO:0043209">
    <property type="term" value="C:myelin sheath"/>
    <property type="evidence" value="ECO:0007005"/>
    <property type="project" value="UniProtKB"/>
</dbReference>
<dbReference type="GO" id="GO:0005654">
    <property type="term" value="C:nucleoplasm"/>
    <property type="evidence" value="ECO:0007669"/>
    <property type="project" value="Ensembl"/>
</dbReference>
<dbReference type="GO" id="GO:0005634">
    <property type="term" value="C:nucleus"/>
    <property type="evidence" value="ECO:0000314"/>
    <property type="project" value="UniProtKB"/>
</dbReference>
<dbReference type="GO" id="GO:0005886">
    <property type="term" value="C:plasma membrane"/>
    <property type="evidence" value="ECO:0000314"/>
    <property type="project" value="UniProtKB"/>
</dbReference>
<dbReference type="GO" id="GO:0014069">
    <property type="term" value="C:postsynaptic density"/>
    <property type="evidence" value="ECO:0007669"/>
    <property type="project" value="Ensembl"/>
</dbReference>
<dbReference type="GO" id="GO:0001850">
    <property type="term" value="F:complement component C3a binding"/>
    <property type="evidence" value="ECO:0007669"/>
    <property type="project" value="Ensembl"/>
</dbReference>
<dbReference type="GO" id="GO:0001851">
    <property type="term" value="F:complement component C3b binding"/>
    <property type="evidence" value="ECO:0007669"/>
    <property type="project" value="Ensembl"/>
</dbReference>
<dbReference type="GO" id="GO:0042826">
    <property type="term" value="F:histone deacetylase binding"/>
    <property type="evidence" value="ECO:0007669"/>
    <property type="project" value="Ensembl"/>
</dbReference>
<dbReference type="GO" id="GO:0046982">
    <property type="term" value="F:protein heterodimerization activity"/>
    <property type="evidence" value="ECO:0007669"/>
    <property type="project" value="Ensembl"/>
</dbReference>
<dbReference type="GO" id="GO:0031871">
    <property type="term" value="F:proteinase activated receptor binding"/>
    <property type="evidence" value="ECO:0007669"/>
    <property type="project" value="Ensembl"/>
</dbReference>
<dbReference type="GO" id="GO:0003714">
    <property type="term" value="F:transcription corepressor activity"/>
    <property type="evidence" value="ECO:0000314"/>
    <property type="project" value="MGI"/>
</dbReference>
<dbReference type="GO" id="GO:0031100">
    <property type="term" value="P:animal organ regeneration"/>
    <property type="evidence" value="ECO:0007669"/>
    <property type="project" value="Ensembl"/>
</dbReference>
<dbReference type="GO" id="GO:0140374">
    <property type="term" value="P:antiviral innate immune response"/>
    <property type="evidence" value="ECO:0007669"/>
    <property type="project" value="Ensembl"/>
</dbReference>
<dbReference type="GO" id="GO:0042113">
    <property type="term" value="P:B cell activation"/>
    <property type="evidence" value="ECO:0000314"/>
    <property type="project" value="UniProtKB"/>
</dbReference>
<dbReference type="GO" id="GO:0071354">
    <property type="term" value="P:cellular response to interleukin-6"/>
    <property type="evidence" value="ECO:0007669"/>
    <property type="project" value="Ensembl"/>
</dbReference>
<dbReference type="GO" id="GO:0071897">
    <property type="term" value="P:DNA biosynthetic process"/>
    <property type="evidence" value="ECO:0000315"/>
    <property type="project" value="MGI"/>
</dbReference>
<dbReference type="GO" id="GO:0040029">
    <property type="term" value="P:epigenetic regulation of gene expression"/>
    <property type="evidence" value="ECO:0007669"/>
    <property type="project" value="Ensembl"/>
</dbReference>
<dbReference type="GO" id="GO:0007005">
    <property type="term" value="P:mitochondrion organization"/>
    <property type="evidence" value="ECO:0000303"/>
    <property type="project" value="ComplexPortal"/>
</dbReference>
<dbReference type="GO" id="GO:0044830">
    <property type="term" value="P:modulation by host of viral RNA genome replication"/>
    <property type="evidence" value="ECO:0000314"/>
    <property type="project" value="UniProtKB"/>
</dbReference>
<dbReference type="GO" id="GO:0060766">
    <property type="term" value="P:negative regulation of androgen receptor signaling pathway"/>
    <property type="evidence" value="ECO:0007669"/>
    <property type="project" value="Ensembl"/>
</dbReference>
<dbReference type="GO" id="GO:0043066">
    <property type="term" value="P:negative regulation of apoptotic process"/>
    <property type="evidence" value="ECO:0007669"/>
    <property type="project" value="Ensembl"/>
</dbReference>
<dbReference type="GO" id="GO:0030308">
    <property type="term" value="P:negative regulation of cell growth"/>
    <property type="evidence" value="ECO:0007669"/>
    <property type="project" value="Ensembl"/>
</dbReference>
<dbReference type="GO" id="GO:0008285">
    <property type="term" value="P:negative regulation of cell population proliferation"/>
    <property type="evidence" value="ECO:0007669"/>
    <property type="project" value="Ensembl"/>
</dbReference>
<dbReference type="GO" id="GO:0070373">
    <property type="term" value="P:negative regulation of ERK1 and ERK2 cascade"/>
    <property type="evidence" value="ECO:0007669"/>
    <property type="project" value="Ensembl"/>
</dbReference>
<dbReference type="GO" id="GO:0010629">
    <property type="term" value="P:negative regulation of gene expression"/>
    <property type="evidence" value="ECO:0007669"/>
    <property type="project" value="Ensembl"/>
</dbReference>
<dbReference type="GO" id="GO:2000323">
    <property type="term" value="P:negative regulation of nuclear receptor-mediated glucocorticoid signaling pathway"/>
    <property type="evidence" value="ECO:0007669"/>
    <property type="project" value="Ensembl"/>
</dbReference>
<dbReference type="GO" id="GO:0042177">
    <property type="term" value="P:negative regulation of protein catabolic process"/>
    <property type="evidence" value="ECO:0007669"/>
    <property type="project" value="Ensembl"/>
</dbReference>
<dbReference type="GO" id="GO:0010944">
    <property type="term" value="P:negative regulation of transcription by competitive promoter binding"/>
    <property type="evidence" value="ECO:0007669"/>
    <property type="project" value="Ensembl"/>
</dbReference>
<dbReference type="GO" id="GO:0000122">
    <property type="term" value="P:negative regulation of transcription by RNA polymerase II"/>
    <property type="evidence" value="ECO:0000314"/>
    <property type="project" value="MGI"/>
</dbReference>
<dbReference type="GO" id="GO:0001552">
    <property type="term" value="P:ovarian follicle atresia"/>
    <property type="evidence" value="ECO:0007669"/>
    <property type="project" value="Ensembl"/>
</dbReference>
<dbReference type="GO" id="GO:0001541">
    <property type="term" value="P:ovarian follicle development"/>
    <property type="evidence" value="ECO:0007669"/>
    <property type="project" value="Ensembl"/>
</dbReference>
<dbReference type="GO" id="GO:0045917">
    <property type="term" value="P:positive regulation of complement activation"/>
    <property type="evidence" value="ECO:0007669"/>
    <property type="project" value="Ensembl"/>
</dbReference>
<dbReference type="GO" id="GO:0045893">
    <property type="term" value="P:positive regulation of DNA-templated transcription"/>
    <property type="evidence" value="ECO:0007669"/>
    <property type="project" value="Ensembl"/>
</dbReference>
<dbReference type="GO" id="GO:0070374">
    <property type="term" value="P:positive regulation of ERK1 and ERK2 cascade"/>
    <property type="evidence" value="ECO:0007669"/>
    <property type="project" value="Ensembl"/>
</dbReference>
<dbReference type="GO" id="GO:0045745">
    <property type="term" value="P:positive regulation of G protein-coupled receptor signaling pathway"/>
    <property type="evidence" value="ECO:0007669"/>
    <property type="project" value="Ensembl"/>
</dbReference>
<dbReference type="GO" id="GO:0002639">
    <property type="term" value="P:positive regulation of immunoglobulin production"/>
    <property type="evidence" value="ECO:0000314"/>
    <property type="project" value="UniProtKB"/>
</dbReference>
<dbReference type="GO" id="GO:0032740">
    <property type="term" value="P:positive regulation of interleukin-17 production"/>
    <property type="evidence" value="ECO:0000250"/>
    <property type="project" value="UniProtKB"/>
</dbReference>
<dbReference type="GO" id="GO:0043525">
    <property type="term" value="P:positive regulation of neuron apoptotic process"/>
    <property type="evidence" value="ECO:0007669"/>
    <property type="project" value="Ensembl"/>
</dbReference>
<dbReference type="GO" id="GO:1901224">
    <property type="term" value="P:positive regulation of non-canonical NF-kappaB signal transduction"/>
    <property type="evidence" value="ECO:0000314"/>
    <property type="project" value="UniProtKB"/>
</dbReference>
<dbReference type="GO" id="GO:0051897">
    <property type="term" value="P:positive regulation of phosphatidylinositol 3-kinase/protein kinase B signal transduction"/>
    <property type="evidence" value="ECO:0000250"/>
    <property type="project" value="UniProtKB"/>
</dbReference>
<dbReference type="GO" id="GO:0048661">
    <property type="term" value="P:positive regulation of smooth muscle cell proliferation"/>
    <property type="evidence" value="ECO:0000250"/>
    <property type="project" value="UniProtKB"/>
</dbReference>
<dbReference type="GO" id="GO:0050847">
    <property type="term" value="P:progesterone receptor signaling pathway"/>
    <property type="evidence" value="ECO:0007669"/>
    <property type="project" value="Ensembl"/>
</dbReference>
<dbReference type="GO" id="GO:0050821">
    <property type="term" value="P:protein stabilization"/>
    <property type="evidence" value="ECO:0000266"/>
    <property type="project" value="ComplexPortal"/>
</dbReference>
<dbReference type="GO" id="GO:0045471">
    <property type="term" value="P:response to ethanol"/>
    <property type="evidence" value="ECO:0007669"/>
    <property type="project" value="Ensembl"/>
</dbReference>
<dbReference type="GO" id="GO:0035902">
    <property type="term" value="P:response to immobilization stress"/>
    <property type="evidence" value="ECO:0007669"/>
    <property type="project" value="Ensembl"/>
</dbReference>
<dbReference type="GO" id="GO:0043434">
    <property type="term" value="P:response to peptide hormone"/>
    <property type="evidence" value="ECO:0007669"/>
    <property type="project" value="Ensembl"/>
</dbReference>
<dbReference type="GO" id="GO:0009410">
    <property type="term" value="P:response to xenobiotic stimulus"/>
    <property type="evidence" value="ECO:0007669"/>
    <property type="project" value="Ensembl"/>
</dbReference>
<dbReference type="GO" id="GO:0039529">
    <property type="term" value="P:RIG-I signaling pathway"/>
    <property type="evidence" value="ECO:0007669"/>
    <property type="project" value="Ensembl"/>
</dbReference>
<dbReference type="GO" id="GO:0046718">
    <property type="term" value="P:symbiont entry into host cell"/>
    <property type="evidence" value="ECO:0000314"/>
    <property type="project" value="UniProtKB"/>
</dbReference>
<dbReference type="GO" id="GO:0072538">
    <property type="term" value="P:T-helper 17 type immune response"/>
    <property type="evidence" value="ECO:0000250"/>
    <property type="project" value="UniProtKB"/>
</dbReference>
<dbReference type="CDD" id="cd03401">
    <property type="entry name" value="SPFH_prohibitin"/>
    <property type="match status" value="1"/>
</dbReference>
<dbReference type="FunFam" id="3.30.479.30:FF:000001">
    <property type="entry name" value="Prohibitin 2"/>
    <property type="match status" value="1"/>
</dbReference>
<dbReference type="Gene3D" id="3.30.479.30">
    <property type="entry name" value="Band 7 domain"/>
    <property type="match status" value="1"/>
</dbReference>
<dbReference type="InterPro" id="IPR001107">
    <property type="entry name" value="Band_7"/>
</dbReference>
<dbReference type="InterPro" id="IPR036013">
    <property type="entry name" value="Band_7/SPFH_dom_sf"/>
</dbReference>
<dbReference type="InterPro" id="IPR000163">
    <property type="entry name" value="Prohibitin"/>
</dbReference>
<dbReference type="PANTHER" id="PTHR23222">
    <property type="entry name" value="PROHIBITIN"/>
    <property type="match status" value="1"/>
</dbReference>
<dbReference type="PANTHER" id="PTHR23222:SF0">
    <property type="entry name" value="PROHIBITIN 1"/>
    <property type="match status" value="1"/>
</dbReference>
<dbReference type="Pfam" id="PF01145">
    <property type="entry name" value="Band_7"/>
    <property type="match status" value="1"/>
</dbReference>
<dbReference type="PRINTS" id="PR00679">
    <property type="entry name" value="PROHIBITIN"/>
</dbReference>
<dbReference type="SMART" id="SM00244">
    <property type="entry name" value="PHB"/>
    <property type="match status" value="1"/>
</dbReference>
<dbReference type="SUPFAM" id="SSF117892">
    <property type="entry name" value="Band 7/SPFH domain"/>
    <property type="match status" value="1"/>
</dbReference>
<sequence>MAAKVFESIGKFGLALAVAGGVVNSALYNVDAGHRAVIFDRFRGVQDIVVGEGTHFLIPWVQKPIIFDCRSRPRNVPVITGSKDLQNVNITLRILFRPVASQLPRIYTSIGEDYDERVLPSITTEILKSVVARFDAGELITQRELVSRQVSDDLTERAATFGLILDDVSLTHLTFGKEFTEAVEAKQVAQQEAERARFVVEKAEQQKKAAIISAEGDSKAAELIANSLATAGDGLIELRKLEAAEDIAYQLSRSRNITYLPAGQSVLLQLPQ</sequence>
<feature type="initiator methionine" description="Removed" evidence="1">
    <location>
        <position position="1"/>
    </location>
</feature>
<feature type="chain" id="PRO_0000213879" description="Prohibitin 1">
    <location>
        <begin position="2"/>
        <end position="272"/>
    </location>
</feature>
<feature type="coiled-coil region" evidence="3">
    <location>
        <begin position="177"/>
        <end position="211"/>
    </location>
</feature>
<feature type="modified residue" description="N-acetylalanine" evidence="1">
    <location>
        <position position="2"/>
    </location>
</feature>
<feature type="modified residue" description="Phosphothreonine" evidence="1">
    <location>
        <position position="91"/>
    </location>
</feature>
<feature type="modified residue" description="N6-acetyllysine" evidence="16">
    <location>
        <position position="128"/>
    </location>
</feature>
<feature type="modified residue" description="N6-acetyllysine" evidence="16">
    <location>
        <position position="186"/>
    </location>
</feature>
<feature type="modified residue" description="N6-acetyllysine; alternate" evidence="16">
    <location>
        <position position="202"/>
    </location>
</feature>
<feature type="modified residue" description="N6-succinyllysine; alternate" evidence="17">
    <location>
        <position position="202"/>
    </location>
</feature>
<feature type="modified residue" description="Phosphotyrosine" evidence="15">
    <location>
        <position position="249"/>
    </location>
</feature>
<feature type="sequence conflict" description="In Ref. 2; BAE29988/BAE30089." evidence="12" ref="2">
    <original>R</original>
    <variation>W</variation>
    <location>
        <position position="255"/>
    </location>
</feature>
<protein>
    <recommendedName>
        <fullName evidence="12">Prohibitin 1</fullName>
    </recommendedName>
    <alternativeName>
        <fullName>B-cell receptor-associated protein 32</fullName>
        <shortName>BAP 32</shortName>
    </alternativeName>
</protein>
<proteinExistence type="evidence at protein level"/>